<organism>
    <name type="scientific">Methanococcus maripaludis (strain DSM 14266 / JCM 13030 / NBRC 101832 / S2 / LL)</name>
    <dbReference type="NCBI Taxonomy" id="267377"/>
    <lineage>
        <taxon>Archaea</taxon>
        <taxon>Methanobacteriati</taxon>
        <taxon>Methanobacteriota</taxon>
        <taxon>Methanomada group</taxon>
        <taxon>Methanococci</taxon>
        <taxon>Methanococcales</taxon>
        <taxon>Methanococcaceae</taxon>
        <taxon>Methanococcus</taxon>
    </lineage>
</organism>
<comment type="function">
    <text evidence="1">Catalytic subunit of DNA primase, an RNA polymerase that catalyzes the synthesis of short RNA molecules used as primers for DNA polymerase during DNA replication. The small subunit contains the primase catalytic core and has DNA synthesis activity on its own. Binding to the large subunit stabilizes and modulates the activity, increasing the rate of DNA synthesis while decreasing the length of the DNA fragments, and conferring RNA synthesis capability. The DNA polymerase activity may enable DNA primase to also catalyze primer extension after primer synthesis. May also play a role in DNA repair.</text>
</comment>
<comment type="cofactor">
    <cofactor evidence="1">
        <name>Mg(2+)</name>
        <dbReference type="ChEBI" id="CHEBI:18420"/>
    </cofactor>
    <cofactor evidence="1">
        <name>Mn(2+)</name>
        <dbReference type="ChEBI" id="CHEBI:29035"/>
    </cofactor>
</comment>
<comment type="subunit">
    <text evidence="1">Heterodimer of a small subunit (PriS) and a large subunit (PriL).</text>
</comment>
<comment type="similarity">
    <text evidence="1">Belongs to the eukaryotic-type primase small subunit family.</text>
</comment>
<reference key="1">
    <citation type="journal article" date="2004" name="J. Bacteriol.">
        <title>Complete genome sequence of the genetically tractable hydrogenotrophic methanogen Methanococcus maripaludis.</title>
        <authorList>
            <person name="Hendrickson E.L."/>
            <person name="Kaul R."/>
            <person name="Zhou Y."/>
            <person name="Bovee D."/>
            <person name="Chapman P."/>
            <person name="Chung J."/>
            <person name="Conway de Macario E."/>
            <person name="Dodsworth J.A."/>
            <person name="Gillett W."/>
            <person name="Graham D.E."/>
            <person name="Hackett M."/>
            <person name="Haydock A.K."/>
            <person name="Kang A."/>
            <person name="Land M.L."/>
            <person name="Levy R."/>
            <person name="Lie T.J."/>
            <person name="Major T.A."/>
            <person name="Moore B.C."/>
            <person name="Porat I."/>
            <person name="Palmeiri A."/>
            <person name="Rouse G."/>
            <person name="Saenphimmachak C."/>
            <person name="Soell D."/>
            <person name="Van Dien S."/>
            <person name="Wang T."/>
            <person name="Whitman W.B."/>
            <person name="Xia Q."/>
            <person name="Zhang Y."/>
            <person name="Larimer F.W."/>
            <person name="Olson M.V."/>
            <person name="Leigh J.A."/>
        </authorList>
    </citation>
    <scope>NUCLEOTIDE SEQUENCE [LARGE SCALE GENOMIC DNA]</scope>
    <source>
        <strain>DSM 14266 / JCM 13030 / NBRC 101832 / S2 / LL</strain>
    </source>
</reference>
<evidence type="ECO:0000255" key="1">
    <source>
        <dbReference type="HAMAP-Rule" id="MF_00700"/>
    </source>
</evidence>
<keyword id="KW-0235">DNA replication</keyword>
<keyword id="KW-0240">DNA-directed RNA polymerase</keyword>
<keyword id="KW-0460">Magnesium</keyword>
<keyword id="KW-0464">Manganese</keyword>
<keyword id="KW-0479">Metal-binding</keyword>
<keyword id="KW-0548">Nucleotidyltransferase</keyword>
<keyword id="KW-0639">Primosome</keyword>
<keyword id="KW-1185">Reference proteome</keyword>
<keyword id="KW-0804">Transcription</keyword>
<keyword id="KW-0808">Transferase</keyword>
<sequence length="357" mass="42294">MNDNPATDKVFKEVSSLYKQYFEYAILVRKWLEIPDDLSHREIGYGMLKKVDNRNMSFNTERDYLAWVLKESPFHLYKSLSYMEYPDIVGGAAKKGLFKREVAFDIDTHKTEKCTHDDSWICEECLGEARNQVLILIEDFLFPDFGLDEKDLKIVFTGNRGYHIYLKPEDPELLKRIEKWGKNERRYFIEYILGKNLNLRNMGSRWKNILVREFNKNKIATKKFEKTSDWKTEIDNRKDTTRRTIYETIDKVKSRLELDEKVMDDDIRLLRTIGSLHGYTGLMVKEITYNSLKNNQFDPLNHGVFSKFHKKMYNVKIKQELDPLTLKGDTFDHNSTEIPASYLLFLFGHGIDFEILE</sequence>
<feature type="chain" id="PRO_0000046745" description="DNA primase small subunit PriS">
    <location>
        <begin position="1"/>
        <end position="357"/>
    </location>
</feature>
<feature type="active site" evidence="1">
    <location>
        <position position="105"/>
    </location>
</feature>
<feature type="active site" evidence="1">
    <location>
        <position position="107"/>
    </location>
</feature>
<feature type="active site" evidence="1">
    <location>
        <position position="259"/>
    </location>
</feature>
<name>PRIS_METMP</name>
<gene>
    <name evidence="1" type="primary">priS</name>
    <name type="synonym">priA</name>
    <name type="ordered locus">MMP0071</name>
</gene>
<dbReference type="EC" id="2.7.7.-" evidence="1"/>
<dbReference type="EMBL" id="BX950229">
    <property type="protein sequence ID" value="CAF29627.1"/>
    <property type="molecule type" value="Genomic_DNA"/>
</dbReference>
<dbReference type="RefSeq" id="WP_011170015.1">
    <property type="nucleotide sequence ID" value="NC_005791.1"/>
</dbReference>
<dbReference type="SMR" id="Q6M146"/>
<dbReference type="STRING" id="267377.MMP0071"/>
<dbReference type="EnsemblBacteria" id="CAF29627">
    <property type="protein sequence ID" value="CAF29627"/>
    <property type="gene ID" value="MMP0071"/>
</dbReference>
<dbReference type="GeneID" id="10981494"/>
<dbReference type="GeneID" id="2762308"/>
<dbReference type="KEGG" id="mmp:MMP0071"/>
<dbReference type="PATRIC" id="fig|267377.15.peg.72"/>
<dbReference type="eggNOG" id="arCOG04110">
    <property type="taxonomic scope" value="Archaea"/>
</dbReference>
<dbReference type="HOGENOM" id="CLU_056123_1_0_2"/>
<dbReference type="OrthoDB" id="31125at2157"/>
<dbReference type="Proteomes" id="UP000000590">
    <property type="component" value="Chromosome"/>
</dbReference>
<dbReference type="GO" id="GO:0000428">
    <property type="term" value="C:DNA-directed RNA polymerase complex"/>
    <property type="evidence" value="ECO:0007669"/>
    <property type="project" value="UniProtKB-KW"/>
</dbReference>
<dbReference type="GO" id="GO:1990077">
    <property type="term" value="C:primosome complex"/>
    <property type="evidence" value="ECO:0007669"/>
    <property type="project" value="UniProtKB-KW"/>
</dbReference>
<dbReference type="GO" id="GO:0003899">
    <property type="term" value="F:DNA-directed RNA polymerase activity"/>
    <property type="evidence" value="ECO:0007669"/>
    <property type="project" value="InterPro"/>
</dbReference>
<dbReference type="GO" id="GO:0046872">
    <property type="term" value="F:metal ion binding"/>
    <property type="evidence" value="ECO:0007669"/>
    <property type="project" value="UniProtKB-KW"/>
</dbReference>
<dbReference type="GO" id="GO:0006269">
    <property type="term" value="P:DNA replication, synthesis of primer"/>
    <property type="evidence" value="ECO:0007669"/>
    <property type="project" value="UniProtKB-UniRule"/>
</dbReference>
<dbReference type="CDD" id="cd04860">
    <property type="entry name" value="AE_Prim_S"/>
    <property type="match status" value="1"/>
</dbReference>
<dbReference type="Gene3D" id="3.90.920.10">
    <property type="entry name" value="DNA primase, PRIM domain"/>
    <property type="match status" value="1"/>
</dbReference>
<dbReference type="HAMAP" id="MF_00700">
    <property type="entry name" value="DNA_primase_sml_arc"/>
    <property type="match status" value="1"/>
</dbReference>
<dbReference type="InterPro" id="IPR002755">
    <property type="entry name" value="DNA_primase_S"/>
</dbReference>
<dbReference type="InterPro" id="IPR014052">
    <property type="entry name" value="DNA_primase_ssu_euk/arc"/>
</dbReference>
<dbReference type="InterPro" id="IPR023639">
    <property type="entry name" value="DNA_primase_ssu_PriS"/>
</dbReference>
<dbReference type="NCBIfam" id="TIGR00335">
    <property type="entry name" value="primase_sml"/>
    <property type="match status" value="1"/>
</dbReference>
<dbReference type="PANTHER" id="PTHR10536">
    <property type="entry name" value="DNA PRIMASE SMALL SUBUNIT"/>
    <property type="match status" value="1"/>
</dbReference>
<dbReference type="Pfam" id="PF01896">
    <property type="entry name" value="DNA_primase_S"/>
    <property type="match status" value="1"/>
</dbReference>
<dbReference type="SUPFAM" id="SSF56747">
    <property type="entry name" value="Prim-pol domain"/>
    <property type="match status" value="1"/>
</dbReference>
<proteinExistence type="inferred from homology"/>
<protein>
    <recommendedName>
        <fullName evidence="1">DNA primase small subunit PriS</fullName>
        <ecNumber evidence="1">2.7.7.-</ecNumber>
    </recommendedName>
</protein>
<accession>Q6M146</accession>